<feature type="chain" id="PRO_0000347295" description="Unknown protein 8">
    <location>
        <begin position="1" status="less than"/>
        <end position="8" status="greater than"/>
    </location>
</feature>
<feature type="non-terminal residue" evidence="1">
    <location>
        <position position="1"/>
    </location>
</feature>
<feature type="non-terminal residue" evidence="1">
    <location>
        <position position="8"/>
    </location>
</feature>
<protein>
    <recommendedName>
        <fullName>Unknown protein 8</fullName>
    </recommendedName>
</protein>
<reference key="1">
    <citation type="journal article" date="2008" name="J. Proteomics">
        <title>A proteomics approach to identify proteins differentially expressed in Douglas-fir seedlings infected by Phellinus sulphurascens.</title>
        <authorList>
            <person name="Islam M.A."/>
            <person name="Sturrock R.N."/>
            <person name="Ekramoddoullah A.K.M."/>
        </authorList>
    </citation>
    <scope>IDENTIFICATION BY MASS SPECTROMETRY</scope>
</reference>
<sequence>LQQAEARR</sequence>
<evidence type="ECO:0000303" key="1">
    <source>
    </source>
</evidence>
<proteinExistence type="evidence at protein level"/>
<accession>P85901</accession>
<name>UP08_PSEMZ</name>
<organism>
    <name type="scientific">Pseudotsuga menziesii</name>
    <name type="common">Douglas-fir</name>
    <name type="synonym">Abies menziesii</name>
    <dbReference type="NCBI Taxonomy" id="3357"/>
    <lineage>
        <taxon>Eukaryota</taxon>
        <taxon>Viridiplantae</taxon>
        <taxon>Streptophyta</taxon>
        <taxon>Embryophyta</taxon>
        <taxon>Tracheophyta</taxon>
        <taxon>Spermatophyta</taxon>
        <taxon>Pinopsida</taxon>
        <taxon>Pinidae</taxon>
        <taxon>Conifers I</taxon>
        <taxon>Pinales</taxon>
        <taxon>Pinaceae</taxon>
        <taxon>Pseudotsuga</taxon>
    </lineage>
</organism>